<dbReference type="EMBL" id="BC132384">
    <property type="protein sequence ID" value="AAI32385.1"/>
    <property type="status" value="ALT_INIT"/>
    <property type="molecule type" value="mRNA"/>
</dbReference>
<dbReference type="EMBL" id="BC145852">
    <property type="protein sequence ID" value="AAI45853.1"/>
    <property type="molecule type" value="mRNA"/>
</dbReference>
<dbReference type="EMBL" id="AK015027">
    <property type="protein sequence ID" value="BAB29682.1"/>
    <property type="status" value="ALT_INIT"/>
    <property type="molecule type" value="mRNA"/>
</dbReference>
<dbReference type="CCDS" id="CCDS49582.1"/>
<dbReference type="RefSeq" id="NP_083706.1">
    <property type="nucleotide sequence ID" value="NM_029430.1"/>
</dbReference>
<dbReference type="SMR" id="A6H6E9"/>
<dbReference type="FunCoup" id="A6H6E9">
    <property type="interactions" value="15"/>
</dbReference>
<dbReference type="STRING" id="10090.ENSMUSP00000022857"/>
<dbReference type="GlyGen" id="A6H6E9">
    <property type="glycosylation" value="1 site, 1 O-linked glycan (1 site)"/>
</dbReference>
<dbReference type="iPTMnet" id="A6H6E9"/>
<dbReference type="PhosphoSitePlus" id="A6H6E9"/>
<dbReference type="PaxDb" id="10090-ENSMUSP00000022857"/>
<dbReference type="PeptideAtlas" id="A6H6E9"/>
<dbReference type="ProteomicsDB" id="298323"/>
<dbReference type="Pumba" id="A6H6E9"/>
<dbReference type="Antibodypedia" id="22823">
    <property type="antibodies" value="63 antibodies from 16 providers"/>
</dbReference>
<dbReference type="Ensembl" id="ENSMUST00000022857.14">
    <property type="protein sequence ID" value="ENSMUSP00000022857.8"/>
    <property type="gene ID" value="ENSMUSG00000022249.15"/>
</dbReference>
<dbReference type="GeneID" id="75777"/>
<dbReference type="KEGG" id="mmu:75777"/>
<dbReference type="UCSC" id="uc007vgj.2">
    <property type="organism name" value="mouse"/>
</dbReference>
<dbReference type="AGR" id="MGI:1923027"/>
<dbReference type="CTD" id="153657"/>
<dbReference type="MGI" id="MGI:1923027">
    <property type="gene designation" value="Ttc23l"/>
</dbReference>
<dbReference type="VEuPathDB" id="HostDB:ENSMUSG00000022249"/>
<dbReference type="eggNOG" id="ENOG502QXY0">
    <property type="taxonomic scope" value="Eukaryota"/>
</dbReference>
<dbReference type="GeneTree" id="ENSGT00530000063847"/>
<dbReference type="HOGENOM" id="CLU_030458_1_0_1"/>
<dbReference type="InParanoid" id="A6H6E9"/>
<dbReference type="OMA" id="IDCMSLP"/>
<dbReference type="OrthoDB" id="9986634at2759"/>
<dbReference type="PhylomeDB" id="A6H6E9"/>
<dbReference type="TreeFam" id="TF332604"/>
<dbReference type="BioGRID-ORCS" id="75777">
    <property type="hits" value="1 hit in 76 CRISPR screens"/>
</dbReference>
<dbReference type="ChiTaRS" id="Ttc23l">
    <property type="organism name" value="mouse"/>
</dbReference>
<dbReference type="PRO" id="PR:A6H6E9"/>
<dbReference type="Proteomes" id="UP000000589">
    <property type="component" value="Chromosome 15"/>
</dbReference>
<dbReference type="RNAct" id="A6H6E9">
    <property type="molecule type" value="protein"/>
</dbReference>
<dbReference type="Bgee" id="ENSMUSG00000022249">
    <property type="expression patterns" value="Expressed in spermatid and 8 other cell types or tissues"/>
</dbReference>
<dbReference type="ExpressionAtlas" id="A6H6E9">
    <property type="expression patterns" value="baseline and differential"/>
</dbReference>
<dbReference type="GO" id="GO:0005813">
    <property type="term" value="C:centrosome"/>
    <property type="evidence" value="ECO:0007669"/>
    <property type="project" value="UniProtKB-SubCell"/>
</dbReference>
<dbReference type="GO" id="GO:0005737">
    <property type="term" value="C:cytoplasm"/>
    <property type="evidence" value="ECO:0007669"/>
    <property type="project" value="UniProtKB-KW"/>
</dbReference>
<dbReference type="GO" id="GO:0030496">
    <property type="term" value="C:midbody"/>
    <property type="evidence" value="ECO:0007669"/>
    <property type="project" value="UniProtKB-SubCell"/>
</dbReference>
<dbReference type="GO" id="GO:0005819">
    <property type="term" value="C:spindle"/>
    <property type="evidence" value="ECO:0007669"/>
    <property type="project" value="UniProtKB-SubCell"/>
</dbReference>
<dbReference type="Gene3D" id="1.25.40.10">
    <property type="entry name" value="Tetratricopeptide repeat domain"/>
    <property type="match status" value="2"/>
</dbReference>
<dbReference type="InterPro" id="IPR011990">
    <property type="entry name" value="TPR-like_helical_dom_sf"/>
</dbReference>
<dbReference type="InterPro" id="IPR019734">
    <property type="entry name" value="TPR_rpt"/>
</dbReference>
<dbReference type="InterPro" id="IPR042621">
    <property type="entry name" value="TTC23/TTC23L"/>
</dbReference>
<dbReference type="PANTHER" id="PTHR14485">
    <property type="entry name" value="TETRATRICOPEPTIDE REPEAT PROTEIN 23"/>
    <property type="match status" value="1"/>
</dbReference>
<dbReference type="PANTHER" id="PTHR14485:SF4">
    <property type="entry name" value="TETRATRICOPEPTIDE REPEAT PROTEIN 23-LIKE"/>
    <property type="match status" value="1"/>
</dbReference>
<dbReference type="Pfam" id="PF13424">
    <property type="entry name" value="TPR_12"/>
    <property type="match status" value="1"/>
</dbReference>
<dbReference type="SMART" id="SM00028">
    <property type="entry name" value="TPR"/>
    <property type="match status" value="3"/>
</dbReference>
<dbReference type="SUPFAM" id="SSF48452">
    <property type="entry name" value="TPR-like"/>
    <property type="match status" value="1"/>
</dbReference>
<proteinExistence type="evidence at transcript level"/>
<organism>
    <name type="scientific">Mus musculus</name>
    <name type="common">Mouse</name>
    <dbReference type="NCBI Taxonomy" id="10090"/>
    <lineage>
        <taxon>Eukaryota</taxon>
        <taxon>Metazoa</taxon>
        <taxon>Chordata</taxon>
        <taxon>Craniata</taxon>
        <taxon>Vertebrata</taxon>
        <taxon>Euteleostomi</taxon>
        <taxon>Mammalia</taxon>
        <taxon>Eutheria</taxon>
        <taxon>Euarchontoglires</taxon>
        <taxon>Glires</taxon>
        <taxon>Rodentia</taxon>
        <taxon>Myomorpha</taxon>
        <taxon>Muroidea</taxon>
        <taxon>Muridae</taxon>
        <taxon>Murinae</taxon>
        <taxon>Mus</taxon>
        <taxon>Mus</taxon>
    </lineage>
</organism>
<reference key="1">
    <citation type="journal article" date="2004" name="Genome Res.">
        <title>The status, quality, and expansion of the NIH full-length cDNA project: the Mammalian Gene Collection (MGC).</title>
        <authorList>
            <consortium name="The MGC Project Team"/>
        </authorList>
    </citation>
    <scope>NUCLEOTIDE SEQUENCE [LARGE SCALE MRNA]</scope>
    <source>
        <tissue>Brain</tissue>
    </source>
</reference>
<reference key="2">
    <citation type="journal article" date="2005" name="Science">
        <title>The transcriptional landscape of the mammalian genome.</title>
        <authorList>
            <person name="Carninci P."/>
            <person name="Kasukawa T."/>
            <person name="Katayama S."/>
            <person name="Gough J."/>
            <person name="Frith M.C."/>
            <person name="Maeda N."/>
            <person name="Oyama R."/>
            <person name="Ravasi T."/>
            <person name="Lenhard B."/>
            <person name="Wells C."/>
            <person name="Kodzius R."/>
            <person name="Shimokawa K."/>
            <person name="Bajic V.B."/>
            <person name="Brenner S.E."/>
            <person name="Batalov S."/>
            <person name="Forrest A.R."/>
            <person name="Zavolan M."/>
            <person name="Davis M.J."/>
            <person name="Wilming L.G."/>
            <person name="Aidinis V."/>
            <person name="Allen J.E."/>
            <person name="Ambesi-Impiombato A."/>
            <person name="Apweiler R."/>
            <person name="Aturaliya R.N."/>
            <person name="Bailey T.L."/>
            <person name="Bansal M."/>
            <person name="Baxter L."/>
            <person name="Beisel K.W."/>
            <person name="Bersano T."/>
            <person name="Bono H."/>
            <person name="Chalk A.M."/>
            <person name="Chiu K.P."/>
            <person name="Choudhary V."/>
            <person name="Christoffels A."/>
            <person name="Clutterbuck D.R."/>
            <person name="Crowe M.L."/>
            <person name="Dalla E."/>
            <person name="Dalrymple B.P."/>
            <person name="de Bono B."/>
            <person name="Della Gatta G."/>
            <person name="di Bernardo D."/>
            <person name="Down T."/>
            <person name="Engstrom P."/>
            <person name="Fagiolini M."/>
            <person name="Faulkner G."/>
            <person name="Fletcher C.F."/>
            <person name="Fukushima T."/>
            <person name="Furuno M."/>
            <person name="Futaki S."/>
            <person name="Gariboldi M."/>
            <person name="Georgii-Hemming P."/>
            <person name="Gingeras T.R."/>
            <person name="Gojobori T."/>
            <person name="Green R.E."/>
            <person name="Gustincich S."/>
            <person name="Harbers M."/>
            <person name="Hayashi Y."/>
            <person name="Hensch T.K."/>
            <person name="Hirokawa N."/>
            <person name="Hill D."/>
            <person name="Huminiecki L."/>
            <person name="Iacono M."/>
            <person name="Ikeo K."/>
            <person name="Iwama A."/>
            <person name="Ishikawa T."/>
            <person name="Jakt M."/>
            <person name="Kanapin A."/>
            <person name="Katoh M."/>
            <person name="Kawasawa Y."/>
            <person name="Kelso J."/>
            <person name="Kitamura H."/>
            <person name="Kitano H."/>
            <person name="Kollias G."/>
            <person name="Krishnan S.P."/>
            <person name="Kruger A."/>
            <person name="Kummerfeld S.K."/>
            <person name="Kurochkin I.V."/>
            <person name="Lareau L.F."/>
            <person name="Lazarevic D."/>
            <person name="Lipovich L."/>
            <person name="Liu J."/>
            <person name="Liuni S."/>
            <person name="McWilliam S."/>
            <person name="Madan Babu M."/>
            <person name="Madera M."/>
            <person name="Marchionni L."/>
            <person name="Matsuda H."/>
            <person name="Matsuzawa S."/>
            <person name="Miki H."/>
            <person name="Mignone F."/>
            <person name="Miyake S."/>
            <person name="Morris K."/>
            <person name="Mottagui-Tabar S."/>
            <person name="Mulder N."/>
            <person name="Nakano N."/>
            <person name="Nakauchi H."/>
            <person name="Ng P."/>
            <person name="Nilsson R."/>
            <person name="Nishiguchi S."/>
            <person name="Nishikawa S."/>
            <person name="Nori F."/>
            <person name="Ohara O."/>
            <person name="Okazaki Y."/>
            <person name="Orlando V."/>
            <person name="Pang K.C."/>
            <person name="Pavan W.J."/>
            <person name="Pavesi G."/>
            <person name="Pesole G."/>
            <person name="Petrovsky N."/>
            <person name="Piazza S."/>
            <person name="Reed J."/>
            <person name="Reid J.F."/>
            <person name="Ring B.Z."/>
            <person name="Ringwald M."/>
            <person name="Rost B."/>
            <person name="Ruan Y."/>
            <person name="Salzberg S.L."/>
            <person name="Sandelin A."/>
            <person name="Schneider C."/>
            <person name="Schoenbach C."/>
            <person name="Sekiguchi K."/>
            <person name="Semple C.A."/>
            <person name="Seno S."/>
            <person name="Sessa L."/>
            <person name="Sheng Y."/>
            <person name="Shibata Y."/>
            <person name="Shimada H."/>
            <person name="Shimada K."/>
            <person name="Silva D."/>
            <person name="Sinclair B."/>
            <person name="Sperling S."/>
            <person name="Stupka E."/>
            <person name="Sugiura K."/>
            <person name="Sultana R."/>
            <person name="Takenaka Y."/>
            <person name="Taki K."/>
            <person name="Tammoja K."/>
            <person name="Tan S.L."/>
            <person name="Tang S."/>
            <person name="Taylor M.S."/>
            <person name="Tegner J."/>
            <person name="Teichmann S.A."/>
            <person name="Ueda H.R."/>
            <person name="van Nimwegen E."/>
            <person name="Verardo R."/>
            <person name="Wei C.L."/>
            <person name="Yagi K."/>
            <person name="Yamanishi H."/>
            <person name="Zabarovsky E."/>
            <person name="Zhu S."/>
            <person name="Zimmer A."/>
            <person name="Hide W."/>
            <person name="Bult C."/>
            <person name="Grimmond S.M."/>
            <person name="Teasdale R.D."/>
            <person name="Liu E.T."/>
            <person name="Brusic V."/>
            <person name="Quackenbush J."/>
            <person name="Wahlestedt C."/>
            <person name="Mattick J.S."/>
            <person name="Hume D.A."/>
            <person name="Kai C."/>
            <person name="Sasaki D."/>
            <person name="Tomaru Y."/>
            <person name="Fukuda S."/>
            <person name="Kanamori-Katayama M."/>
            <person name="Suzuki M."/>
            <person name="Aoki J."/>
            <person name="Arakawa T."/>
            <person name="Iida J."/>
            <person name="Imamura K."/>
            <person name="Itoh M."/>
            <person name="Kato T."/>
            <person name="Kawaji H."/>
            <person name="Kawagashira N."/>
            <person name="Kawashima T."/>
            <person name="Kojima M."/>
            <person name="Kondo S."/>
            <person name="Konno H."/>
            <person name="Nakano K."/>
            <person name="Ninomiya N."/>
            <person name="Nishio T."/>
            <person name="Okada M."/>
            <person name="Plessy C."/>
            <person name="Shibata K."/>
            <person name="Shiraki T."/>
            <person name="Suzuki S."/>
            <person name="Tagami M."/>
            <person name="Waki K."/>
            <person name="Watahiki A."/>
            <person name="Okamura-Oho Y."/>
            <person name="Suzuki H."/>
            <person name="Kawai J."/>
            <person name="Hayashizaki Y."/>
        </authorList>
    </citation>
    <scope>NUCLEOTIDE SEQUENCE [LARGE SCALE MRNA] OF 5-458</scope>
    <source>
        <strain>C57BL/6J</strain>
        <tissue>Testis</tissue>
    </source>
</reference>
<sequence length="458" mass="51532">MARAPAQARGSRGLNCLARSQQTGIPAQETDDLFSTCYCEETEEDTAHQEAGMTVDCLSIPKKKLAQSQKKINQFINSKMSTKANKELIRCFILSQIVFGKEHWKCAQALANLAYGYLTLRGLPAQAKKHAEKARNTLLTWKRNTTSDKDKKEILETLVRLYYTLGVAWLLQNHGKQAYIHLQKAERNMKELKELNNGNICGIQVSEKDLTIALGRASLAMHRMNLALAYFEKAICDVILDKGHNTSELISLYEEIAQIEQLRKNHKQAIQYLQQAYSICVSSFSEVSPQTAEASALLAKAYAMSGASEYRDAVEIYFIRSISTYQTLGSEDYETLTAIEDFCTWLIENGEKQEAYRLLKSTLNSGNFGDCGKKVAETFYNMGSICFAKGELGEAIELLSKCLMIQSLVYGSEHIKSIETKSLLSLLQRWRLKETLEKNRKEASGGETFQKTVITLLQ</sequence>
<keyword id="KW-0175">Coiled coil</keyword>
<keyword id="KW-0963">Cytoplasm</keyword>
<keyword id="KW-0206">Cytoskeleton</keyword>
<keyword id="KW-1185">Reference proteome</keyword>
<feature type="chain" id="PRO_0000336081" description="Tetratricopeptide repeat protein 23-like">
    <location>
        <begin position="1"/>
        <end position="458"/>
    </location>
</feature>
<feature type="coiled-coil region" evidence="2">
    <location>
        <begin position="175"/>
        <end position="198"/>
    </location>
</feature>
<feature type="coiled-coil region" evidence="2">
    <location>
        <begin position="246"/>
        <end position="278"/>
    </location>
</feature>
<accession>A6H6E9</accession>
<accession>A3KMM7</accession>
<accession>Q9D5Q3</accession>
<comment type="subcellular location">
    <subcellularLocation>
        <location evidence="1">Cytoplasm</location>
        <location evidence="1">Cytoskeleton</location>
        <location evidence="1">Microtubule organizing center</location>
        <location evidence="1">Centrosome</location>
    </subcellularLocation>
    <subcellularLocation>
        <location evidence="1">Cytoplasm</location>
        <location evidence="1">Cytoskeleton</location>
        <location evidence="1">Spindle</location>
    </subcellularLocation>
    <subcellularLocation>
        <location evidence="1">Midbody</location>
    </subcellularLocation>
    <text evidence="1">Exhibits dynamic subcellular localization during the cell cycle. In prophase cells, detected on split centrosomes. Translocates to the mitotic spindles during metaphase and early anaphase, then to the midbody and cleavage furrow in late anaphase.</text>
</comment>
<comment type="sequence caution" evidence="3">
    <conflict type="erroneous initiation">
        <sequence resource="EMBL-CDS" id="AAI32385"/>
    </conflict>
</comment>
<comment type="sequence caution" evidence="3">
    <conflict type="erroneous initiation">
        <sequence resource="EMBL-CDS" id="BAB29682"/>
    </conflict>
</comment>
<evidence type="ECO:0000250" key="1">
    <source>
        <dbReference type="UniProtKB" id="Q6PF05"/>
    </source>
</evidence>
<evidence type="ECO:0000255" key="2"/>
<evidence type="ECO:0000305" key="3"/>
<name>TT23L_MOUSE</name>
<protein>
    <recommendedName>
        <fullName>Tetratricopeptide repeat protein 23-like</fullName>
    </recommendedName>
</protein>
<gene>
    <name type="primary">Ttc23l</name>
</gene>